<proteinExistence type="inferred from homology"/>
<sequence length="38" mass="4210">MDWRVVVVLAPVIIAGSWAIFNIAAAALNQLRNMQTKK</sequence>
<keyword id="KW-0472">Membrane</keyword>
<keyword id="KW-0602">Photosynthesis</keyword>
<keyword id="KW-0604">Photosystem II</keyword>
<keyword id="KW-1185">Reference proteome</keyword>
<keyword id="KW-0793">Thylakoid</keyword>
<keyword id="KW-0812">Transmembrane</keyword>
<keyword id="KW-1133">Transmembrane helix</keyword>
<comment type="function">
    <text evidence="1">Loosely associated component of the core of photosystem II (PSII), it is not always seen in crystals. PSII is a light-driven water plastoquinone oxidoreductase, using light energy to abstract electrons from H(2)O, generating a proton gradient subsequently used for ATP formation.</text>
</comment>
<comment type="subunit">
    <text evidence="1">PSII is composed of 1 copy each of membrane proteins PsbA, PsbB, PsbC, PsbD, PsbE, PsbF, PsbH, PsbI, PsbJ, PsbK, PsbL, PsbM, PsbT, PsbX, PsbY, PsbZ, Psb30/Ycf12, peripheral proteins PsbO, CyanoQ (PsbQ), PsbU, PsbV and a large number of cofactors. It forms dimeric complexes.</text>
</comment>
<comment type="subcellular location">
    <subcellularLocation>
        <location evidence="1">Cellular thylakoid membrane</location>
        <topology evidence="1">Single-pass membrane protein</topology>
    </subcellularLocation>
</comment>
<comment type="similarity">
    <text evidence="1">Belongs to the PsbY family.</text>
</comment>
<evidence type="ECO:0000255" key="1">
    <source>
        <dbReference type="HAMAP-Rule" id="MF_00717"/>
    </source>
</evidence>
<gene>
    <name evidence="1" type="primary">psbY</name>
    <name type="ordered locus">SYNPCC7002_A1347</name>
</gene>
<reference key="1">
    <citation type="submission" date="2008-02" db="EMBL/GenBank/DDBJ databases">
        <title>Complete sequence of Synechococcus sp. PCC 7002.</title>
        <authorList>
            <person name="Li T."/>
            <person name="Zhao J."/>
            <person name="Zhao C."/>
            <person name="Liu Z."/>
            <person name="Zhao F."/>
            <person name="Marquardt J."/>
            <person name="Nomura C.T."/>
            <person name="Persson S."/>
            <person name="Detter J.C."/>
            <person name="Richardson P.M."/>
            <person name="Lanz C."/>
            <person name="Schuster S.C."/>
            <person name="Wang J."/>
            <person name="Li S."/>
            <person name="Huang X."/>
            <person name="Cai T."/>
            <person name="Yu Z."/>
            <person name="Luo J."/>
            <person name="Zhao J."/>
            <person name="Bryant D.A."/>
        </authorList>
    </citation>
    <scope>NUCLEOTIDE SEQUENCE [LARGE SCALE GENOMIC DNA]</scope>
    <source>
        <strain>ATCC 27264 / PCC 7002 / PR-6</strain>
    </source>
</reference>
<dbReference type="EMBL" id="CP000951">
    <property type="protein sequence ID" value="ACA99343.1"/>
    <property type="molecule type" value="Genomic_DNA"/>
</dbReference>
<dbReference type="RefSeq" id="WP_012306966.1">
    <property type="nucleotide sequence ID" value="NZ_JAHHPU010000001.1"/>
</dbReference>
<dbReference type="SMR" id="B1XLQ0"/>
<dbReference type="STRING" id="32049.SYNPCC7002_A1347"/>
<dbReference type="KEGG" id="syp:SYNPCC7002_A1347"/>
<dbReference type="eggNOG" id="ENOG5030VJ1">
    <property type="taxonomic scope" value="Bacteria"/>
</dbReference>
<dbReference type="HOGENOM" id="CLU_218393_1_0_3"/>
<dbReference type="Proteomes" id="UP000001688">
    <property type="component" value="Chromosome"/>
</dbReference>
<dbReference type="GO" id="GO:0009523">
    <property type="term" value="C:photosystem II"/>
    <property type="evidence" value="ECO:0007669"/>
    <property type="project" value="UniProtKB-KW"/>
</dbReference>
<dbReference type="GO" id="GO:0031676">
    <property type="term" value="C:plasma membrane-derived thylakoid membrane"/>
    <property type="evidence" value="ECO:0007669"/>
    <property type="project" value="UniProtKB-SubCell"/>
</dbReference>
<dbReference type="GO" id="GO:0030145">
    <property type="term" value="F:manganese ion binding"/>
    <property type="evidence" value="ECO:0007669"/>
    <property type="project" value="InterPro"/>
</dbReference>
<dbReference type="GO" id="GO:0015979">
    <property type="term" value="P:photosynthesis"/>
    <property type="evidence" value="ECO:0007669"/>
    <property type="project" value="UniProtKB-UniRule"/>
</dbReference>
<dbReference type="HAMAP" id="MF_00717">
    <property type="entry name" value="PSII_PsbY"/>
    <property type="match status" value="1"/>
</dbReference>
<dbReference type="InterPro" id="IPR009388">
    <property type="entry name" value="PSII_PsbY"/>
</dbReference>
<dbReference type="NCBIfam" id="NF009711">
    <property type="entry name" value="PRK13240.1"/>
    <property type="match status" value="1"/>
</dbReference>
<dbReference type="Pfam" id="PF06298">
    <property type="entry name" value="PsbY"/>
    <property type="match status" value="1"/>
</dbReference>
<protein>
    <recommendedName>
        <fullName evidence="1">Photosystem II reaction center protein Y</fullName>
    </recommendedName>
</protein>
<organism>
    <name type="scientific">Picosynechococcus sp. (strain ATCC 27264 / PCC 7002 / PR-6)</name>
    <name type="common">Agmenellum quadruplicatum</name>
    <dbReference type="NCBI Taxonomy" id="32049"/>
    <lineage>
        <taxon>Bacteria</taxon>
        <taxon>Bacillati</taxon>
        <taxon>Cyanobacteriota</taxon>
        <taxon>Cyanophyceae</taxon>
        <taxon>Oscillatoriophycideae</taxon>
        <taxon>Chroococcales</taxon>
        <taxon>Geminocystaceae</taxon>
        <taxon>Picosynechococcus</taxon>
    </lineage>
</organism>
<feature type="chain" id="PRO_1000192887" description="Photosystem II reaction center protein Y">
    <location>
        <begin position="1"/>
        <end position="38"/>
    </location>
</feature>
<feature type="transmembrane region" description="Helical" evidence="1">
    <location>
        <begin position="5"/>
        <end position="23"/>
    </location>
</feature>
<name>PSBY_PICP2</name>
<accession>B1XLQ0</accession>